<keyword id="KW-1003">Cell membrane</keyword>
<keyword id="KW-0413">Isomerase</keyword>
<keyword id="KW-0449">Lipoprotein</keyword>
<keyword id="KW-0472">Membrane</keyword>
<keyword id="KW-0564">Palmitate</keyword>
<keyword id="KW-1185">Reference proteome</keyword>
<keyword id="KW-0697">Rotamase</keyword>
<keyword id="KW-0732">Signal</keyword>
<evidence type="ECO:0000255" key="1">
    <source>
        <dbReference type="HAMAP-Rule" id="MF_01145"/>
    </source>
</evidence>
<gene>
    <name evidence="1" type="primary">prsA</name>
    <name type="ordered locus">OB1148</name>
</gene>
<proteinExistence type="inferred from homology"/>
<feature type="signal peptide" evidence="1">
    <location>
        <begin position="1"/>
        <end position="19"/>
    </location>
</feature>
<feature type="chain" id="PRO_0000029317" description="Foldase protein PrsA">
    <location>
        <begin position="20"/>
        <end position="299"/>
    </location>
</feature>
<feature type="domain" description="PpiC" evidence="1">
    <location>
        <begin position="137"/>
        <end position="227"/>
    </location>
</feature>
<feature type="lipid moiety-binding region" description="N-palmitoyl cysteine" evidence="1">
    <location>
        <position position="20"/>
    </location>
</feature>
<feature type="lipid moiety-binding region" description="S-diacylglycerol cysteine" evidence="1">
    <location>
        <position position="20"/>
    </location>
</feature>
<name>PRSA_OCEIH</name>
<protein>
    <recommendedName>
        <fullName evidence="1">Foldase protein PrsA</fullName>
        <ecNumber evidence="1">5.2.1.8</ecNumber>
    </recommendedName>
</protein>
<dbReference type="EC" id="5.2.1.8" evidence="1"/>
<dbReference type="EMBL" id="BA000028">
    <property type="protein sequence ID" value="BAC13104.1"/>
    <property type="molecule type" value="Genomic_DNA"/>
</dbReference>
<dbReference type="RefSeq" id="WP_011065549.1">
    <property type="nucleotide sequence ID" value="NC_004193.1"/>
</dbReference>
<dbReference type="SMR" id="Q8CXK4"/>
<dbReference type="STRING" id="221109.gene:10733387"/>
<dbReference type="KEGG" id="oih:OB1148"/>
<dbReference type="eggNOG" id="COG0760">
    <property type="taxonomic scope" value="Bacteria"/>
</dbReference>
<dbReference type="HOGENOM" id="CLU_034646_6_1_9"/>
<dbReference type="OrthoDB" id="14196at2"/>
<dbReference type="PhylomeDB" id="Q8CXK4"/>
<dbReference type="Proteomes" id="UP000000822">
    <property type="component" value="Chromosome"/>
</dbReference>
<dbReference type="GO" id="GO:0005886">
    <property type="term" value="C:plasma membrane"/>
    <property type="evidence" value="ECO:0007669"/>
    <property type="project" value="UniProtKB-SubCell"/>
</dbReference>
<dbReference type="GO" id="GO:0003755">
    <property type="term" value="F:peptidyl-prolyl cis-trans isomerase activity"/>
    <property type="evidence" value="ECO:0007669"/>
    <property type="project" value="UniProtKB-UniRule"/>
</dbReference>
<dbReference type="GO" id="GO:0006457">
    <property type="term" value="P:protein folding"/>
    <property type="evidence" value="ECO:0007669"/>
    <property type="project" value="UniProtKB-UniRule"/>
</dbReference>
<dbReference type="Gene3D" id="3.10.50.40">
    <property type="match status" value="1"/>
</dbReference>
<dbReference type="HAMAP" id="MF_01145">
    <property type="entry name" value="Foldase_PrsA"/>
    <property type="match status" value="1"/>
</dbReference>
<dbReference type="InterPro" id="IPR023059">
    <property type="entry name" value="Foldase_PrsA"/>
</dbReference>
<dbReference type="InterPro" id="IPR046357">
    <property type="entry name" value="PPIase_dom_sf"/>
</dbReference>
<dbReference type="InterPro" id="IPR000297">
    <property type="entry name" value="PPIase_PpiC"/>
</dbReference>
<dbReference type="InterPro" id="IPR023058">
    <property type="entry name" value="PPIase_PpiC_CS"/>
</dbReference>
<dbReference type="InterPro" id="IPR050245">
    <property type="entry name" value="PrsA_foldase"/>
</dbReference>
<dbReference type="InterPro" id="IPR027304">
    <property type="entry name" value="Trigger_fact/SurA_dom_sf"/>
</dbReference>
<dbReference type="PANTHER" id="PTHR47245:SF1">
    <property type="entry name" value="FOLDASE PROTEIN PRSA"/>
    <property type="match status" value="1"/>
</dbReference>
<dbReference type="PANTHER" id="PTHR47245">
    <property type="entry name" value="PEPTIDYLPROLYL ISOMERASE"/>
    <property type="match status" value="1"/>
</dbReference>
<dbReference type="Pfam" id="PF13616">
    <property type="entry name" value="Rotamase_3"/>
    <property type="match status" value="1"/>
</dbReference>
<dbReference type="SUPFAM" id="SSF54534">
    <property type="entry name" value="FKBP-like"/>
    <property type="match status" value="1"/>
</dbReference>
<dbReference type="SUPFAM" id="SSF109998">
    <property type="entry name" value="Triger factor/SurA peptide-binding domain-like"/>
    <property type="match status" value="1"/>
</dbReference>
<dbReference type="PROSITE" id="PS01096">
    <property type="entry name" value="PPIC_PPIASE_1"/>
    <property type="match status" value="1"/>
</dbReference>
<dbReference type="PROSITE" id="PS50198">
    <property type="entry name" value="PPIC_PPIASE_2"/>
    <property type="match status" value="1"/>
</dbReference>
<dbReference type="PROSITE" id="PS51257">
    <property type="entry name" value="PROKAR_LIPOPROTEIN"/>
    <property type="match status" value="1"/>
</dbReference>
<accession>Q8CXK4</accession>
<sequence length="299" mass="33618">MKKWTIAASLSIGVLALSACNSDDEIVAETEAGNITKEEFYEELKDVNGESTLQQLVTVKVLEDNYEVTDEELEEEISTMKEGFPSEEDFNTTVEQQFGGEEQLREIMYVSMLQEKAAAEDVEITEEDLQELYERKNTEIQAQHILLENEEDVAEVQQKIEDGEDFGELAQEYSTDTGSAENGGDLGYFSAGSMVPEFEEAAFSLEAGEISDPVQSTHGTHIIKVNDVREKEESIGEFEDVKKELEREILLNRVDQTQIQEKINKLIQDAGVQINVEGMEDLFEAEETEENTTEEDAQG</sequence>
<reference key="1">
    <citation type="journal article" date="2002" name="Nucleic Acids Res.">
        <title>Genome sequence of Oceanobacillus iheyensis isolated from the Iheya Ridge and its unexpected adaptive capabilities to extreme environments.</title>
        <authorList>
            <person name="Takami H."/>
            <person name="Takaki Y."/>
            <person name="Uchiyama I."/>
        </authorList>
    </citation>
    <scope>NUCLEOTIDE SEQUENCE [LARGE SCALE GENOMIC DNA]</scope>
    <source>
        <strain>DSM 14371 / CIP 107618 / JCM 11309 / KCTC 3954 / HTE831</strain>
    </source>
</reference>
<comment type="function">
    <text evidence="1">Plays a major role in protein secretion by helping the post-translocational extracellular folding of several secreted proteins.</text>
</comment>
<comment type="catalytic activity">
    <reaction evidence="1">
        <text>[protein]-peptidylproline (omega=180) = [protein]-peptidylproline (omega=0)</text>
        <dbReference type="Rhea" id="RHEA:16237"/>
        <dbReference type="Rhea" id="RHEA-COMP:10747"/>
        <dbReference type="Rhea" id="RHEA-COMP:10748"/>
        <dbReference type="ChEBI" id="CHEBI:83833"/>
        <dbReference type="ChEBI" id="CHEBI:83834"/>
        <dbReference type="EC" id="5.2.1.8"/>
    </reaction>
</comment>
<comment type="subcellular location">
    <subcellularLocation>
        <location evidence="1">Cell membrane</location>
        <topology evidence="1">Lipid-anchor</topology>
    </subcellularLocation>
</comment>
<comment type="similarity">
    <text evidence="1">Belongs to the PrsA family.</text>
</comment>
<organism>
    <name type="scientific">Oceanobacillus iheyensis (strain DSM 14371 / CIP 107618 / JCM 11309 / KCTC 3954 / HTE831)</name>
    <dbReference type="NCBI Taxonomy" id="221109"/>
    <lineage>
        <taxon>Bacteria</taxon>
        <taxon>Bacillati</taxon>
        <taxon>Bacillota</taxon>
        <taxon>Bacilli</taxon>
        <taxon>Bacillales</taxon>
        <taxon>Bacillaceae</taxon>
        <taxon>Oceanobacillus</taxon>
    </lineage>
</organism>